<organism>
    <name type="scientific">Serratia marcescens</name>
    <dbReference type="NCBI Taxonomy" id="615"/>
    <lineage>
        <taxon>Bacteria</taxon>
        <taxon>Pseudomonadati</taxon>
        <taxon>Pseudomonadota</taxon>
        <taxon>Gammaproteobacteria</taxon>
        <taxon>Enterobacterales</taxon>
        <taxon>Yersiniaceae</taxon>
        <taxon>Serratia</taxon>
    </lineage>
</organism>
<gene>
    <name type="primary">chiB</name>
</gene>
<sequence length="499" mass="55464">MSTRKAVIGYYFIPTNQINNYTETDTSVVPFPVSNITPAKAKQLTHINFSFLDINSNLECAWDPATNDAKARDVVNRLTALKAHNPSLRIMFSIGGWYYSNDLGVSHANYVNAVKTPAARTKFAQSCVRIMKDYGFDGVDIDWEYPQAAEVDGFIAALQEIRTLLNQQTIADGRQALPYQLTIAGAGGAFFLSRYYSKLAQIVAPLDYINLMTYDLAGPWEKITNHQAALFGDAAGPTFYNALREANLGWSWEELTRAFPSPFSLTVDAAVQQHLMMEGVPSAKIVMGVPFYGRAFKGVSGGNGGQYSSHSTPGEDPYPNADYWLVGCDECVRDKDPRIASYRQLEQMLQGNYGYQRLWNDKTKTPYLYHAQNGLFVTYDDAESFKYKAKYIKQQQLGGVMFWHLGQDNRNGDLLAALDRYFNAADYDDSQLDMGTGLRYTGVGPGNLPIMTAPAYVPGTTYAQGALVSYQGYVWQTKWGYITSAPGSDSAWLKVGRLA</sequence>
<evidence type="ECO:0000255" key="1">
    <source>
        <dbReference type="PROSITE-ProRule" id="PRU01258"/>
    </source>
</evidence>
<evidence type="ECO:0000305" key="2"/>
<evidence type="ECO:0007829" key="3">
    <source>
        <dbReference type="PDB" id="1GOI"/>
    </source>
</evidence>
<evidence type="ECO:0007829" key="4">
    <source>
        <dbReference type="PDB" id="1H0G"/>
    </source>
</evidence>
<evidence type="ECO:0007829" key="5">
    <source>
        <dbReference type="PDB" id="1O6I"/>
    </source>
</evidence>
<evidence type="ECO:0007829" key="6">
    <source>
        <dbReference type="PDB" id="4Z2G"/>
    </source>
</evidence>
<keyword id="KW-0002">3D-structure</keyword>
<keyword id="KW-0119">Carbohydrate metabolism</keyword>
<keyword id="KW-0146">Chitin degradation</keyword>
<keyword id="KW-0326">Glycosidase</keyword>
<keyword id="KW-0378">Hydrolase</keyword>
<keyword id="KW-0624">Polysaccharide degradation</keyword>
<keyword id="KW-0732">Signal</keyword>
<accession>P11797</accession>
<protein>
    <recommendedName>
        <fullName>Chitinase B</fullName>
        <ecNumber>3.2.1.14</ecNumber>
    </recommendedName>
</protein>
<proteinExistence type="evidence at protein level"/>
<comment type="catalytic activity">
    <reaction>
        <text>Random endo-hydrolysis of N-acetyl-beta-D-glucosaminide (1-&gt;4)-beta-linkages in chitin and chitodextrins.</text>
        <dbReference type="EC" id="3.2.1.14"/>
    </reaction>
</comment>
<comment type="similarity">
    <text evidence="2">Belongs to the glycosyl hydrolase 18 family. Chitinase class II subfamily.</text>
</comment>
<reference key="1">
    <citation type="journal article" date="1989" name="Nucleic Acids Res.">
        <title>Nucleotide sequence of the chitinase B gene of Serratia marcescens QMB1466.</title>
        <authorList>
            <person name="Harpster M.H."/>
            <person name="Dunsmuir P."/>
        </authorList>
    </citation>
    <scope>NUCLEOTIDE SEQUENCE [GENOMIC DNA]</scope>
    <source>
        <strain>ATCC 990 / QMB1466</strain>
    </source>
</reference>
<reference key="2">
    <citation type="journal article" date="1997" name="J. Bacteriol.">
        <title>Genetic analysis of the chitinase system of Serratia marcescens 2170.</title>
        <authorList>
            <person name="Watanabe T."/>
            <person name="Kimura K."/>
            <person name="Sumiya T."/>
            <person name="Nikaidou N."/>
            <person name="Suzuki K."/>
            <person name="Suzuki M."/>
            <person name="Taiyoji M."/>
            <person name="Ferrer S."/>
            <person name="Regue M."/>
        </authorList>
    </citation>
    <scope>NUCLEOTIDE SEQUENCE [GENOMIC DNA]</scope>
    <source>
        <strain>2170</strain>
    </source>
</reference>
<dbReference type="EC" id="3.2.1.14"/>
<dbReference type="EMBL" id="X15208">
    <property type="protein sequence ID" value="CAA33278.1"/>
    <property type="molecule type" value="Genomic_DNA"/>
</dbReference>
<dbReference type="EMBL" id="AB015997">
    <property type="protein sequence ID" value="BAA31568.1"/>
    <property type="molecule type" value="Genomic_DNA"/>
</dbReference>
<dbReference type="PIR" id="S04856">
    <property type="entry name" value="S04856"/>
</dbReference>
<dbReference type="RefSeq" id="WP_016926761.1">
    <property type="nucleotide sequence ID" value="NZ_VOUW01000021.1"/>
</dbReference>
<dbReference type="PDB" id="1E6N">
    <property type="method" value="X-ray"/>
    <property type="resolution" value="2.25 A"/>
    <property type="chains" value="A/B=1-497"/>
</dbReference>
<dbReference type="PDB" id="1GOI">
    <property type="method" value="X-ray"/>
    <property type="resolution" value="1.45 A"/>
    <property type="chains" value="A/B=1-497"/>
</dbReference>
<dbReference type="PDB" id="1H0G">
    <property type="method" value="X-ray"/>
    <property type="resolution" value="2.00 A"/>
    <property type="chains" value="A/B=1-497"/>
</dbReference>
<dbReference type="PDB" id="1H0I">
    <property type="method" value="X-ray"/>
    <property type="resolution" value="2.00 A"/>
    <property type="chains" value="A/B=1-497"/>
</dbReference>
<dbReference type="PDB" id="1O6I">
    <property type="method" value="X-ray"/>
    <property type="resolution" value="1.70 A"/>
    <property type="chains" value="A/B=1-497"/>
</dbReference>
<dbReference type="PDB" id="1OGB">
    <property type="method" value="X-ray"/>
    <property type="resolution" value="1.85 A"/>
    <property type="chains" value="A/B=1-497"/>
</dbReference>
<dbReference type="PDB" id="1OGG">
    <property type="method" value="X-ray"/>
    <property type="resolution" value="1.97 A"/>
    <property type="chains" value="A/B=1-497"/>
</dbReference>
<dbReference type="PDB" id="3WD0">
    <property type="method" value="X-ray"/>
    <property type="resolution" value="1.70 A"/>
    <property type="chains" value="A=2-499"/>
</dbReference>
<dbReference type="PDB" id="3WD1">
    <property type="method" value="X-ray"/>
    <property type="resolution" value="2.30 A"/>
    <property type="chains" value="A=2-499"/>
</dbReference>
<dbReference type="PDB" id="3WD2">
    <property type="method" value="X-ray"/>
    <property type="resolution" value="2.20 A"/>
    <property type="chains" value="A=2-499"/>
</dbReference>
<dbReference type="PDB" id="3WD3">
    <property type="method" value="X-ray"/>
    <property type="resolution" value="2.20 A"/>
    <property type="chains" value="A=2-499"/>
</dbReference>
<dbReference type="PDB" id="3WD4">
    <property type="method" value="X-ray"/>
    <property type="resolution" value="2.00 A"/>
    <property type="chains" value="A=2-499"/>
</dbReference>
<dbReference type="PDB" id="4Z2G">
    <property type="method" value="X-ray"/>
    <property type="resolution" value="2.60 A"/>
    <property type="chains" value="A=2-499"/>
</dbReference>
<dbReference type="PDB" id="4Z2H">
    <property type="method" value="X-ray"/>
    <property type="resolution" value="2.35 A"/>
    <property type="chains" value="A=2-499"/>
</dbReference>
<dbReference type="PDB" id="4Z2I">
    <property type="method" value="X-ray"/>
    <property type="resolution" value="2.00 A"/>
    <property type="chains" value="A=2-499"/>
</dbReference>
<dbReference type="PDB" id="4Z2J">
    <property type="method" value="X-ray"/>
    <property type="resolution" value="2.60 A"/>
    <property type="chains" value="A=2-499"/>
</dbReference>
<dbReference type="PDB" id="4Z2K">
    <property type="method" value="X-ray"/>
    <property type="resolution" value="2.30 A"/>
    <property type="chains" value="A=2-499"/>
</dbReference>
<dbReference type="PDB" id="4Z2L">
    <property type="method" value="X-ray"/>
    <property type="resolution" value="2.30 A"/>
    <property type="chains" value="A=2-499"/>
</dbReference>
<dbReference type="PDB" id="6JK9">
    <property type="method" value="X-ray"/>
    <property type="resolution" value="2.31 A"/>
    <property type="chains" value="A/B=3-498"/>
</dbReference>
<dbReference type="PDB" id="6JKF">
    <property type="method" value="X-ray"/>
    <property type="resolution" value="1.99 A"/>
    <property type="chains" value="A/B=3-499"/>
</dbReference>
<dbReference type="PDB" id="7C34">
    <property type="method" value="X-ray"/>
    <property type="resolution" value="1.94 A"/>
    <property type="chains" value="A/B=3-498"/>
</dbReference>
<dbReference type="PDB" id="7C92">
    <property type="method" value="X-ray"/>
    <property type="resolution" value="2.32 A"/>
    <property type="chains" value="A/B=2-499"/>
</dbReference>
<dbReference type="PDB" id="7CB1">
    <property type="method" value="X-ray"/>
    <property type="resolution" value="1.98 A"/>
    <property type="chains" value="A/B=2-499"/>
</dbReference>
<dbReference type="PDBsum" id="1E6N"/>
<dbReference type="PDBsum" id="1GOI"/>
<dbReference type="PDBsum" id="1H0G"/>
<dbReference type="PDBsum" id="1H0I"/>
<dbReference type="PDBsum" id="1O6I"/>
<dbReference type="PDBsum" id="1OGB"/>
<dbReference type="PDBsum" id="1OGG"/>
<dbReference type="PDBsum" id="3WD0"/>
<dbReference type="PDBsum" id="3WD1"/>
<dbReference type="PDBsum" id="3WD2"/>
<dbReference type="PDBsum" id="3WD3"/>
<dbReference type="PDBsum" id="3WD4"/>
<dbReference type="PDBsum" id="4Z2G"/>
<dbReference type="PDBsum" id="4Z2H"/>
<dbReference type="PDBsum" id="4Z2I"/>
<dbReference type="PDBsum" id="4Z2J"/>
<dbReference type="PDBsum" id="4Z2K"/>
<dbReference type="PDBsum" id="4Z2L"/>
<dbReference type="PDBsum" id="6JK9"/>
<dbReference type="PDBsum" id="6JKF"/>
<dbReference type="PDBsum" id="7C34"/>
<dbReference type="PDBsum" id="7C92"/>
<dbReference type="PDBsum" id="7CB1"/>
<dbReference type="SMR" id="P11797"/>
<dbReference type="STRING" id="273526.SMDB11_2875"/>
<dbReference type="BindingDB" id="P11797"/>
<dbReference type="ChEMBL" id="CHEMBL5348"/>
<dbReference type="DrugBank" id="DB04520">
    <property type="generic name" value="(3s,8ar)-3-(4-Hydroxybenzyl)Hexahydropyrrolo[1,2-a]Pyrazine-1,4-Dione"/>
</dbReference>
<dbReference type="DrugBank" id="DB02813">
    <property type="generic name" value="2-Acetamido-2-Deoxy-D-Glucono-1,5-Lactone"/>
</dbReference>
<dbReference type="DrugBank" id="DB03109">
    <property type="generic name" value="2-acetylamino-2-deoxy-b-D-allopyranose"/>
</dbReference>
<dbReference type="DrugBank" id="DB04628">
    <property type="generic name" value="Allosamidin"/>
</dbReference>
<dbReference type="DrugBank" id="DB04404">
    <property type="generic name" value="Allosamizoline"/>
</dbReference>
<dbReference type="DrugBank" id="DB02414">
    <property type="generic name" value="Cyclo(his-pro)"/>
</dbReference>
<dbReference type="DrugBank" id="DB04541">
    <property type="generic name" value="Cyclo(prolylglycyl)"/>
</dbReference>
<dbReference type="DrugBank" id="DB04157">
    <property type="generic name" value="N-[(Aminooxy)Carbonyl]Aniline"/>
</dbReference>
<dbReference type="DrugBank" id="DB04433">
    <property type="generic name" value="Verpacamide A"/>
</dbReference>
<dbReference type="CAZy" id="CBM5">
    <property type="family name" value="Carbohydrate-Binding Module Family 5"/>
</dbReference>
<dbReference type="CAZy" id="GH18">
    <property type="family name" value="Glycoside Hydrolase Family 18"/>
</dbReference>
<dbReference type="BioCyc" id="MetaCyc:MONOMER-20051"/>
<dbReference type="BRENDA" id="3.2.1.14">
    <property type="organism ID" value="5690"/>
</dbReference>
<dbReference type="BRENDA" id="3.2.1.200">
    <property type="organism ID" value="5690"/>
</dbReference>
<dbReference type="SABIO-RK" id="P11797"/>
<dbReference type="EvolutionaryTrace" id="P11797"/>
<dbReference type="GO" id="GO:0005576">
    <property type="term" value="C:extracellular region"/>
    <property type="evidence" value="ECO:0007669"/>
    <property type="project" value="InterPro"/>
</dbReference>
<dbReference type="GO" id="GO:0030246">
    <property type="term" value="F:carbohydrate binding"/>
    <property type="evidence" value="ECO:0007669"/>
    <property type="project" value="InterPro"/>
</dbReference>
<dbReference type="GO" id="GO:0008061">
    <property type="term" value="F:chitin binding"/>
    <property type="evidence" value="ECO:0007669"/>
    <property type="project" value="InterPro"/>
</dbReference>
<dbReference type="GO" id="GO:0008843">
    <property type="term" value="F:endochitinase activity"/>
    <property type="evidence" value="ECO:0007669"/>
    <property type="project" value="UniProtKB-EC"/>
</dbReference>
<dbReference type="GO" id="GO:0006032">
    <property type="term" value="P:chitin catabolic process"/>
    <property type="evidence" value="ECO:0007669"/>
    <property type="project" value="UniProtKB-KW"/>
</dbReference>
<dbReference type="GO" id="GO:0000272">
    <property type="term" value="P:polysaccharide catabolic process"/>
    <property type="evidence" value="ECO:0007669"/>
    <property type="project" value="UniProtKB-KW"/>
</dbReference>
<dbReference type="CDD" id="cd12204">
    <property type="entry name" value="CBD_like"/>
    <property type="match status" value="1"/>
</dbReference>
<dbReference type="CDD" id="cd06548">
    <property type="entry name" value="GH18_chitinase"/>
    <property type="match status" value="1"/>
</dbReference>
<dbReference type="Gene3D" id="3.10.50.10">
    <property type="match status" value="1"/>
</dbReference>
<dbReference type="Gene3D" id="2.10.10.20">
    <property type="entry name" value="Carbohydrate-binding module superfamily 5/12"/>
    <property type="match status" value="1"/>
</dbReference>
<dbReference type="Gene3D" id="3.20.20.80">
    <property type="entry name" value="Glycosidases"/>
    <property type="match status" value="1"/>
</dbReference>
<dbReference type="InterPro" id="IPR003610">
    <property type="entry name" value="CBM5/12"/>
</dbReference>
<dbReference type="InterPro" id="IPR036573">
    <property type="entry name" value="CBM_sf_5/12"/>
</dbReference>
<dbReference type="InterPro" id="IPR011583">
    <property type="entry name" value="Chitinase_II/V-like_cat"/>
</dbReference>
<dbReference type="InterPro" id="IPR029070">
    <property type="entry name" value="Chitinase_insertion_sf"/>
</dbReference>
<dbReference type="InterPro" id="IPR001223">
    <property type="entry name" value="Glyco_hydro18_cat"/>
</dbReference>
<dbReference type="InterPro" id="IPR001579">
    <property type="entry name" value="Glyco_hydro_18_chit_AS"/>
</dbReference>
<dbReference type="InterPro" id="IPR017853">
    <property type="entry name" value="Glycoside_hydrolase_SF"/>
</dbReference>
<dbReference type="InterPro" id="IPR050314">
    <property type="entry name" value="Glycosyl_Hydrlase_18"/>
</dbReference>
<dbReference type="PANTHER" id="PTHR11177">
    <property type="entry name" value="CHITINASE"/>
    <property type="match status" value="1"/>
</dbReference>
<dbReference type="PANTHER" id="PTHR11177:SF317">
    <property type="entry name" value="CHITINASE 12-RELATED"/>
    <property type="match status" value="1"/>
</dbReference>
<dbReference type="Pfam" id="PF00704">
    <property type="entry name" value="Glyco_hydro_18"/>
    <property type="match status" value="1"/>
</dbReference>
<dbReference type="SMART" id="SM00495">
    <property type="entry name" value="ChtBD3"/>
    <property type="match status" value="1"/>
</dbReference>
<dbReference type="SMART" id="SM00636">
    <property type="entry name" value="Glyco_18"/>
    <property type="match status" value="1"/>
</dbReference>
<dbReference type="SUPFAM" id="SSF51445">
    <property type="entry name" value="(Trans)glycosidases"/>
    <property type="match status" value="1"/>
</dbReference>
<dbReference type="SUPFAM" id="SSF51055">
    <property type="entry name" value="Carbohydrate binding domain"/>
    <property type="match status" value="1"/>
</dbReference>
<dbReference type="SUPFAM" id="SSF54556">
    <property type="entry name" value="Chitinase insertion domain"/>
    <property type="match status" value="1"/>
</dbReference>
<dbReference type="PROSITE" id="PS01095">
    <property type="entry name" value="GH18_1"/>
    <property type="match status" value="1"/>
</dbReference>
<dbReference type="PROSITE" id="PS51910">
    <property type="entry name" value="GH18_2"/>
    <property type="match status" value="1"/>
</dbReference>
<name>CHIB_SERMA</name>
<feature type="signal peptide">
    <location>
        <begin position="1"/>
        <end position="41"/>
    </location>
</feature>
<feature type="chain" id="PRO_0000011909" description="Chitinase B">
    <location>
        <begin position="42"/>
        <end position="499"/>
    </location>
</feature>
<feature type="domain" description="GH18" evidence="1">
    <location>
        <begin position="42"/>
        <end position="425"/>
    </location>
</feature>
<feature type="domain" description="Chitin-binding type-3">
    <location>
        <begin position="438"/>
        <end position="498"/>
    </location>
</feature>
<feature type="active site" description="Proton donor" evidence="1">
    <location>
        <position position="144"/>
    </location>
</feature>
<feature type="binding site" evidence="1">
    <location>
        <begin position="68"/>
        <end position="69"/>
    </location>
    <ligand>
        <name>chitin</name>
        <dbReference type="ChEBI" id="CHEBI:17029"/>
    </ligand>
</feature>
<feature type="binding site" evidence="1">
    <location>
        <begin position="95"/>
        <end position="98"/>
    </location>
    <ligand>
        <name>chitin</name>
        <dbReference type="ChEBI" id="CHEBI:17029"/>
    </ligand>
</feature>
<feature type="binding site" evidence="1">
    <location>
        <position position="145"/>
    </location>
    <ligand>
        <name>chitin</name>
        <dbReference type="ChEBI" id="CHEBI:17029"/>
    </ligand>
</feature>
<feature type="binding site" evidence="1">
    <location>
        <begin position="212"/>
        <end position="215"/>
    </location>
    <ligand>
        <name>chitin</name>
        <dbReference type="ChEBI" id="CHEBI:17029"/>
    </ligand>
</feature>
<feature type="binding site" evidence="1">
    <location>
        <position position="403"/>
    </location>
    <ligand>
        <name>chitin</name>
        <dbReference type="ChEBI" id="CHEBI:17029"/>
    </ligand>
</feature>
<feature type="strand" evidence="3">
    <location>
        <begin position="6"/>
        <end position="12"/>
    </location>
</feature>
<feature type="helix" evidence="3">
    <location>
        <begin position="15"/>
        <end position="19"/>
    </location>
</feature>
<feature type="turn" evidence="3">
    <location>
        <begin position="26"/>
        <end position="28"/>
    </location>
</feature>
<feature type="helix" evidence="3">
    <location>
        <begin position="33"/>
        <end position="35"/>
    </location>
</feature>
<feature type="helix" evidence="3">
    <location>
        <begin position="38"/>
        <end position="43"/>
    </location>
</feature>
<feature type="strand" evidence="3">
    <location>
        <begin position="45"/>
        <end position="54"/>
    </location>
</feature>
<feature type="strand" evidence="3">
    <location>
        <begin position="58"/>
        <end position="61"/>
    </location>
</feature>
<feature type="helix" evidence="3">
    <location>
        <begin position="68"/>
        <end position="80"/>
    </location>
</feature>
<feature type="helix" evidence="3">
    <location>
        <begin position="81"/>
        <end position="84"/>
    </location>
</feature>
<feature type="strand" evidence="3">
    <location>
        <begin position="89"/>
        <end position="95"/>
    </location>
</feature>
<feature type="helix" evidence="3">
    <location>
        <begin position="97"/>
        <end position="100"/>
    </location>
</feature>
<feature type="strand" evidence="6">
    <location>
        <begin position="104"/>
        <end position="106"/>
    </location>
</feature>
<feature type="helix" evidence="3">
    <location>
        <begin position="107"/>
        <end position="113"/>
    </location>
</feature>
<feature type="helix" evidence="3">
    <location>
        <begin position="117"/>
        <end position="134"/>
    </location>
</feature>
<feature type="strand" evidence="3">
    <location>
        <begin position="137"/>
        <end position="142"/>
    </location>
</feature>
<feature type="helix" evidence="3">
    <location>
        <begin position="148"/>
        <end position="171"/>
    </location>
</feature>
<feature type="strand" evidence="3">
    <location>
        <begin position="180"/>
        <end position="188"/>
    </location>
</feature>
<feature type="helix" evidence="3">
    <location>
        <begin position="189"/>
        <end position="192"/>
    </location>
</feature>
<feature type="turn" evidence="3">
    <location>
        <begin position="193"/>
        <end position="195"/>
    </location>
</feature>
<feature type="helix" evidence="3">
    <location>
        <begin position="196"/>
        <end position="198"/>
    </location>
</feature>
<feature type="helix" evidence="3">
    <location>
        <begin position="199"/>
        <end position="203"/>
    </location>
</feature>
<feature type="strand" evidence="3">
    <location>
        <begin position="207"/>
        <end position="212"/>
    </location>
</feature>
<feature type="strand" evidence="3">
    <location>
        <begin position="221"/>
        <end position="223"/>
    </location>
</feature>
<feature type="strand" evidence="3">
    <location>
        <begin position="230"/>
        <end position="232"/>
    </location>
</feature>
<feature type="helix" evidence="3">
    <location>
        <begin position="242"/>
        <end position="245"/>
    </location>
</feature>
<feature type="helix" evidence="3">
    <location>
        <begin position="252"/>
        <end position="258"/>
    </location>
</feature>
<feature type="strand" evidence="3">
    <location>
        <begin position="261"/>
        <end position="263"/>
    </location>
</feature>
<feature type="helix" evidence="3">
    <location>
        <begin position="267"/>
        <end position="275"/>
    </location>
</feature>
<feature type="helix" evidence="3">
    <location>
        <begin position="282"/>
        <end position="284"/>
    </location>
</feature>
<feature type="strand" evidence="3">
    <location>
        <begin position="285"/>
        <end position="298"/>
    </location>
</feature>
<feature type="strand" evidence="3">
    <location>
        <begin position="301"/>
        <end position="303"/>
    </location>
</feature>
<feature type="turn" evidence="3">
    <location>
        <begin position="304"/>
        <end position="307"/>
    </location>
</feature>
<feature type="strand" evidence="4">
    <location>
        <begin position="315"/>
        <end position="317"/>
    </location>
</feature>
<feature type="strand" evidence="3">
    <location>
        <begin position="319"/>
        <end position="321"/>
    </location>
</feature>
<feature type="helix" evidence="3">
    <location>
        <begin position="329"/>
        <end position="334"/>
    </location>
</feature>
<feature type="strand" evidence="3">
    <location>
        <begin position="339"/>
        <end position="341"/>
    </location>
</feature>
<feature type="helix" evidence="3">
    <location>
        <begin position="342"/>
        <end position="350"/>
    </location>
</feature>
<feature type="strand" evidence="3">
    <location>
        <begin position="353"/>
        <end position="360"/>
    </location>
</feature>
<feature type="turn" evidence="3">
    <location>
        <begin position="361"/>
        <end position="364"/>
    </location>
</feature>
<feature type="strand" evidence="3">
    <location>
        <begin position="365"/>
        <end position="370"/>
    </location>
</feature>
<feature type="turn" evidence="3">
    <location>
        <begin position="371"/>
        <end position="374"/>
    </location>
</feature>
<feature type="strand" evidence="3">
    <location>
        <begin position="375"/>
        <end position="378"/>
    </location>
</feature>
<feature type="helix" evidence="3">
    <location>
        <begin position="382"/>
        <end position="394"/>
    </location>
</feature>
<feature type="strand" evidence="3">
    <location>
        <begin position="399"/>
        <end position="403"/>
    </location>
</feature>
<feature type="helix" evidence="3">
    <location>
        <begin position="405"/>
        <end position="407"/>
    </location>
</feature>
<feature type="helix" evidence="3">
    <location>
        <begin position="413"/>
        <end position="423"/>
    </location>
</feature>
<feature type="helix" evidence="5">
    <location>
        <begin position="445"/>
        <end position="447"/>
    </location>
</feature>
<feature type="strand" evidence="3">
    <location>
        <begin position="467"/>
        <end position="470"/>
    </location>
</feature>
<feature type="strand" evidence="3">
    <location>
        <begin position="473"/>
        <end position="480"/>
    </location>
</feature>
<feature type="turn" evidence="3">
    <location>
        <begin position="486"/>
        <end position="488"/>
    </location>
</feature>
<feature type="strand" evidence="3">
    <location>
        <begin position="492"/>
        <end position="497"/>
    </location>
</feature>